<feature type="chain" id="PRO_0000412892" description="Maltokinase">
    <location>
        <begin position="1"/>
        <end position="444"/>
    </location>
</feature>
<organism>
    <name type="scientific">Mycobacterium sp. (strain MCS)</name>
    <dbReference type="NCBI Taxonomy" id="164756"/>
    <lineage>
        <taxon>Bacteria</taxon>
        <taxon>Bacillati</taxon>
        <taxon>Actinomycetota</taxon>
        <taxon>Actinomycetes</taxon>
        <taxon>Mycobacteriales</taxon>
        <taxon>Mycobacteriaceae</taxon>
        <taxon>Mycobacterium</taxon>
    </lineage>
</organism>
<sequence length="444" mass="49489">MNLPFDDWLPQQRWYGGRSREFSSATPDVVVTLRDDLDLVLLTVNYAEGRPEHYQILVRWDAAPIDEYSVVARIGSDTEHGERTGYDALYDPAAAHFLMTLIDSSAQVGDIRFAKEPEVTLPLQAAPRVSSAEQSNTSVIFDQDAILKVFRRITPGINPDIELNRVLARAGNPHVARLLGSFETTLDREPYALGMVTEFAANSAEGWDMALTSTRDLFAEGDLYADEVGGDFAGESHRLGEAVASVHSTLAAELGTSQVPFPLDTVLERLQSVADAVPELQPHAQSIEERYRKLADQEITVHRVHGDLHLGQVLRTTEGWLLIDFEGEPGQPLDERRRPDSPMRDVAGMLRSYEYAAYQRLIERGGDAQHDKQLAARAREWVNRNVSSFCDGYAAASGTDPRDHAELLAAYELDKAVYEVGYEARYRPSWLPIPMKSILRILGV</sequence>
<protein>
    <recommendedName>
        <fullName>Maltokinase</fullName>
        <shortName>MaK</shortName>
        <ecNumber>2.7.1.175</ecNumber>
    </recommendedName>
    <alternativeName>
        <fullName>Maltose-1-phosphate synthase</fullName>
    </alternativeName>
</protein>
<name>MAK_MYCSS</name>
<comment type="function">
    <text evidence="1">Catalyzes the ATP-dependent phosphorylation of maltose to maltose 1-phosphate. Is involved in a branched alpha-glucan biosynthetic pathway from trehalose, together with TreS, GlgE and GlgB (By similarity).</text>
</comment>
<comment type="catalytic activity">
    <reaction>
        <text>D-maltose + ATP = alpha-maltose 1-phosphate + ADP + H(+)</text>
        <dbReference type="Rhea" id="RHEA:31915"/>
        <dbReference type="ChEBI" id="CHEBI:15378"/>
        <dbReference type="ChEBI" id="CHEBI:17306"/>
        <dbReference type="ChEBI" id="CHEBI:30616"/>
        <dbReference type="ChEBI" id="CHEBI:63576"/>
        <dbReference type="ChEBI" id="CHEBI:456216"/>
        <dbReference type="EC" id="2.7.1.175"/>
    </reaction>
</comment>
<comment type="pathway">
    <text>Glycan biosynthesis; glycogen biosynthesis.</text>
</comment>
<comment type="subunit">
    <text evidence="1">Monomer.</text>
</comment>
<comment type="similarity">
    <text evidence="2">Belongs to the aminoglycoside phosphotransferase family.</text>
</comment>
<proteinExistence type="inferred from homology"/>
<evidence type="ECO:0000250" key="1"/>
<evidence type="ECO:0000305" key="2"/>
<dbReference type="EC" id="2.7.1.175"/>
<dbReference type="EMBL" id="CP000384">
    <property type="protein sequence ID" value="ABG11224.1"/>
    <property type="molecule type" value="Genomic_DNA"/>
</dbReference>
<dbReference type="SMR" id="Q1B1L0"/>
<dbReference type="KEGG" id="mmc:Mmcs_5120"/>
<dbReference type="HOGENOM" id="CLU_029675_0_0_11"/>
<dbReference type="BioCyc" id="MSP164756:G1G6O-5234-MONOMER"/>
<dbReference type="UniPathway" id="UPA00164"/>
<dbReference type="GO" id="GO:0005524">
    <property type="term" value="F:ATP binding"/>
    <property type="evidence" value="ECO:0007669"/>
    <property type="project" value="UniProtKB-KW"/>
</dbReference>
<dbReference type="GO" id="GO:0016301">
    <property type="term" value="F:kinase activity"/>
    <property type="evidence" value="ECO:0007669"/>
    <property type="project" value="UniProtKB-KW"/>
</dbReference>
<dbReference type="GO" id="GO:0046835">
    <property type="term" value="P:carbohydrate phosphorylation"/>
    <property type="evidence" value="ECO:0000250"/>
    <property type="project" value="UniProtKB"/>
</dbReference>
<dbReference type="GO" id="GO:0005978">
    <property type="term" value="P:glycogen biosynthetic process"/>
    <property type="evidence" value="ECO:0007669"/>
    <property type="project" value="UniProtKB-UniPathway"/>
</dbReference>
<dbReference type="GO" id="GO:0005992">
    <property type="term" value="P:trehalose biosynthetic process"/>
    <property type="evidence" value="ECO:0000250"/>
    <property type="project" value="UniProtKB"/>
</dbReference>
<dbReference type="FunFam" id="3.90.1200.10:FF:000010">
    <property type="entry name" value="Maltokinase"/>
    <property type="match status" value="1"/>
</dbReference>
<dbReference type="Gene3D" id="3.90.1200.10">
    <property type="match status" value="1"/>
</dbReference>
<dbReference type="InterPro" id="IPR002575">
    <property type="entry name" value="Aminoglycoside_PTrfase"/>
</dbReference>
<dbReference type="InterPro" id="IPR011009">
    <property type="entry name" value="Kinase-like_dom_sf"/>
</dbReference>
<dbReference type="InterPro" id="IPR040999">
    <property type="entry name" value="Mak_N_cap"/>
</dbReference>
<dbReference type="Pfam" id="PF01636">
    <property type="entry name" value="APH"/>
    <property type="match status" value="1"/>
</dbReference>
<dbReference type="Pfam" id="PF18085">
    <property type="entry name" value="Mak_N_cap"/>
    <property type="match status" value="1"/>
</dbReference>
<dbReference type="SUPFAM" id="SSF56112">
    <property type="entry name" value="Protein kinase-like (PK-like)"/>
    <property type="match status" value="1"/>
</dbReference>
<gene>
    <name type="primary">mak</name>
    <name type="ordered locus">Mmcs_5120</name>
</gene>
<accession>Q1B1L0</accession>
<keyword id="KW-0067">ATP-binding</keyword>
<keyword id="KW-0119">Carbohydrate metabolism</keyword>
<keyword id="KW-0320">Glycogen biosynthesis</keyword>
<keyword id="KW-0321">Glycogen metabolism</keyword>
<keyword id="KW-0418">Kinase</keyword>
<keyword id="KW-0547">Nucleotide-binding</keyword>
<keyword id="KW-0808">Transferase</keyword>
<reference key="1">
    <citation type="submission" date="2006-06" db="EMBL/GenBank/DDBJ databases">
        <title>Complete sequence of chromosome of Mycobacterium sp. MCS.</title>
        <authorList>
            <consortium name="US DOE Joint Genome Institute"/>
            <person name="Copeland A."/>
            <person name="Lucas S."/>
            <person name="Lapidus A."/>
            <person name="Barry K."/>
            <person name="Detter J.C."/>
            <person name="Glavina del Rio T."/>
            <person name="Hammon N."/>
            <person name="Israni S."/>
            <person name="Dalin E."/>
            <person name="Tice H."/>
            <person name="Pitluck S."/>
            <person name="Martinez M."/>
            <person name="Schmutz J."/>
            <person name="Larimer F."/>
            <person name="Land M."/>
            <person name="Hauser L."/>
            <person name="Kyrpides N."/>
            <person name="Kim E."/>
            <person name="Miller C.D."/>
            <person name="Hughes J.E."/>
            <person name="Anderson A.J."/>
            <person name="Sims R.C."/>
            <person name="Richardson P."/>
        </authorList>
    </citation>
    <scope>NUCLEOTIDE SEQUENCE [LARGE SCALE GENOMIC DNA]</scope>
    <source>
        <strain>MCS</strain>
    </source>
</reference>